<proteinExistence type="inferred from homology"/>
<accession>Q5GRV6</accession>
<keyword id="KW-0030">Aminoacyl-tRNA synthetase</keyword>
<keyword id="KW-0067">ATP-binding</keyword>
<keyword id="KW-0963">Cytoplasm</keyword>
<keyword id="KW-0436">Ligase</keyword>
<keyword id="KW-0479">Metal-binding</keyword>
<keyword id="KW-0547">Nucleotide-binding</keyword>
<keyword id="KW-0648">Protein biosynthesis</keyword>
<keyword id="KW-1185">Reference proteome</keyword>
<keyword id="KW-0862">Zinc</keyword>
<feature type="chain" id="PRO_0000240973" description="Cysteine--tRNA ligase">
    <location>
        <begin position="1"/>
        <end position="433"/>
    </location>
</feature>
<feature type="short sequence motif" description="'HIGH' region">
    <location>
        <begin position="6"/>
        <end position="16"/>
    </location>
</feature>
<feature type="short sequence motif" description="'KMSKS' region">
    <location>
        <begin position="246"/>
        <end position="250"/>
    </location>
</feature>
<feature type="binding site" evidence="1">
    <location>
        <position position="4"/>
    </location>
    <ligand>
        <name>Zn(2+)</name>
        <dbReference type="ChEBI" id="CHEBI:29105"/>
    </ligand>
</feature>
<feature type="binding site" evidence="1">
    <location>
        <position position="188"/>
    </location>
    <ligand>
        <name>Zn(2+)</name>
        <dbReference type="ChEBI" id="CHEBI:29105"/>
    </ligand>
</feature>
<feature type="binding site" evidence="1">
    <location>
        <position position="213"/>
    </location>
    <ligand>
        <name>Zn(2+)</name>
        <dbReference type="ChEBI" id="CHEBI:29105"/>
    </ligand>
</feature>
<feature type="binding site" evidence="1">
    <location>
        <position position="217"/>
    </location>
    <ligand>
        <name>Zn(2+)</name>
        <dbReference type="ChEBI" id="CHEBI:29105"/>
    </ligand>
</feature>
<feature type="binding site" evidence="1">
    <location>
        <position position="249"/>
    </location>
    <ligand>
        <name>ATP</name>
        <dbReference type="ChEBI" id="CHEBI:30616"/>
    </ligand>
</feature>
<gene>
    <name evidence="1" type="primary">cysS</name>
    <name type="ordered locus">Wbm0680</name>
</gene>
<evidence type="ECO:0000255" key="1">
    <source>
        <dbReference type="HAMAP-Rule" id="MF_00041"/>
    </source>
</evidence>
<organism>
    <name type="scientific">Wolbachia sp. subsp. Brugia malayi (strain TRS)</name>
    <dbReference type="NCBI Taxonomy" id="292805"/>
    <lineage>
        <taxon>Bacteria</taxon>
        <taxon>Pseudomonadati</taxon>
        <taxon>Pseudomonadota</taxon>
        <taxon>Alphaproteobacteria</taxon>
        <taxon>Rickettsiales</taxon>
        <taxon>Anaplasmataceae</taxon>
        <taxon>Wolbachieae</taxon>
        <taxon>Wolbachia</taxon>
    </lineage>
</organism>
<reference key="1">
    <citation type="journal article" date="2005" name="PLoS Biol.">
        <title>The Wolbachia genome of Brugia malayi: endosymbiont evolution within a human pathogenic nematode.</title>
        <authorList>
            <person name="Foster J."/>
            <person name="Ganatra M."/>
            <person name="Kamal I."/>
            <person name="Ware J."/>
            <person name="Makarova K."/>
            <person name="Ivanova N."/>
            <person name="Bhattacharyya A."/>
            <person name="Kapatral V."/>
            <person name="Kumar S."/>
            <person name="Posfai J."/>
            <person name="Vincze T."/>
            <person name="Ingram J."/>
            <person name="Moran L."/>
            <person name="Lapidus A."/>
            <person name="Omelchenko M."/>
            <person name="Kyrpides N."/>
            <person name="Ghedin E."/>
            <person name="Wang S."/>
            <person name="Goltsman E."/>
            <person name="Joukov V."/>
            <person name="Ostrovskaya O."/>
            <person name="Tsukerman K."/>
            <person name="Mazur M."/>
            <person name="Comb D."/>
            <person name="Koonin E."/>
            <person name="Slatko B."/>
        </authorList>
    </citation>
    <scope>NUCLEOTIDE SEQUENCE [LARGE SCALE GENOMIC DNA]</scope>
    <source>
        <strain>TRS</strain>
    </source>
</reference>
<dbReference type="EC" id="6.1.1.16" evidence="1"/>
<dbReference type="EMBL" id="AE017321">
    <property type="protein sequence ID" value="AAW71268.1"/>
    <property type="molecule type" value="Genomic_DNA"/>
</dbReference>
<dbReference type="SMR" id="Q5GRV6"/>
<dbReference type="STRING" id="292805.Wbm0680"/>
<dbReference type="KEGG" id="wbm:Wbm0680"/>
<dbReference type="eggNOG" id="COG0215">
    <property type="taxonomic scope" value="Bacteria"/>
</dbReference>
<dbReference type="HOGENOM" id="CLU_013528_0_1_5"/>
<dbReference type="Proteomes" id="UP000000534">
    <property type="component" value="Chromosome"/>
</dbReference>
<dbReference type="GO" id="GO:0005829">
    <property type="term" value="C:cytosol"/>
    <property type="evidence" value="ECO:0007669"/>
    <property type="project" value="TreeGrafter"/>
</dbReference>
<dbReference type="GO" id="GO:0005524">
    <property type="term" value="F:ATP binding"/>
    <property type="evidence" value="ECO:0007669"/>
    <property type="project" value="UniProtKB-UniRule"/>
</dbReference>
<dbReference type="GO" id="GO:0004817">
    <property type="term" value="F:cysteine-tRNA ligase activity"/>
    <property type="evidence" value="ECO:0007669"/>
    <property type="project" value="UniProtKB-UniRule"/>
</dbReference>
<dbReference type="GO" id="GO:0008270">
    <property type="term" value="F:zinc ion binding"/>
    <property type="evidence" value="ECO:0007669"/>
    <property type="project" value="UniProtKB-UniRule"/>
</dbReference>
<dbReference type="GO" id="GO:0006423">
    <property type="term" value="P:cysteinyl-tRNA aminoacylation"/>
    <property type="evidence" value="ECO:0007669"/>
    <property type="project" value="UniProtKB-UniRule"/>
</dbReference>
<dbReference type="CDD" id="cd00672">
    <property type="entry name" value="CysRS_core"/>
    <property type="match status" value="1"/>
</dbReference>
<dbReference type="Gene3D" id="1.20.120.1910">
    <property type="entry name" value="Cysteine-tRNA ligase, C-terminal anti-codon recognition domain"/>
    <property type="match status" value="1"/>
</dbReference>
<dbReference type="Gene3D" id="3.40.50.620">
    <property type="entry name" value="HUPs"/>
    <property type="match status" value="1"/>
</dbReference>
<dbReference type="HAMAP" id="MF_00041">
    <property type="entry name" value="Cys_tRNA_synth"/>
    <property type="match status" value="1"/>
</dbReference>
<dbReference type="InterPro" id="IPR015803">
    <property type="entry name" value="Cys-tRNA-ligase"/>
</dbReference>
<dbReference type="InterPro" id="IPR015273">
    <property type="entry name" value="Cys-tRNA-synt_Ia_DALR"/>
</dbReference>
<dbReference type="InterPro" id="IPR024909">
    <property type="entry name" value="Cys-tRNA/MSH_ligase"/>
</dbReference>
<dbReference type="InterPro" id="IPR014729">
    <property type="entry name" value="Rossmann-like_a/b/a_fold"/>
</dbReference>
<dbReference type="InterPro" id="IPR032678">
    <property type="entry name" value="tRNA-synt_1_cat_dom"/>
</dbReference>
<dbReference type="InterPro" id="IPR009080">
    <property type="entry name" value="tRNAsynth_Ia_anticodon-bd"/>
</dbReference>
<dbReference type="NCBIfam" id="TIGR00435">
    <property type="entry name" value="cysS"/>
    <property type="match status" value="1"/>
</dbReference>
<dbReference type="PANTHER" id="PTHR10890:SF3">
    <property type="entry name" value="CYSTEINE--TRNA LIGASE, CYTOPLASMIC"/>
    <property type="match status" value="1"/>
</dbReference>
<dbReference type="PANTHER" id="PTHR10890">
    <property type="entry name" value="CYSTEINYL-TRNA SYNTHETASE"/>
    <property type="match status" value="1"/>
</dbReference>
<dbReference type="Pfam" id="PF09190">
    <property type="entry name" value="DALR_2"/>
    <property type="match status" value="1"/>
</dbReference>
<dbReference type="Pfam" id="PF01406">
    <property type="entry name" value="tRNA-synt_1e"/>
    <property type="match status" value="1"/>
</dbReference>
<dbReference type="PRINTS" id="PR00983">
    <property type="entry name" value="TRNASYNTHCYS"/>
</dbReference>
<dbReference type="SMART" id="SM00840">
    <property type="entry name" value="DALR_2"/>
    <property type="match status" value="1"/>
</dbReference>
<dbReference type="SUPFAM" id="SSF47323">
    <property type="entry name" value="Anticodon-binding domain of a subclass of class I aminoacyl-tRNA synthetases"/>
    <property type="match status" value="1"/>
</dbReference>
<dbReference type="SUPFAM" id="SSF52374">
    <property type="entry name" value="Nucleotidylyl transferase"/>
    <property type="match status" value="1"/>
</dbReference>
<comment type="catalytic activity">
    <reaction evidence="1">
        <text>tRNA(Cys) + L-cysteine + ATP = L-cysteinyl-tRNA(Cys) + AMP + diphosphate</text>
        <dbReference type="Rhea" id="RHEA:17773"/>
        <dbReference type="Rhea" id="RHEA-COMP:9661"/>
        <dbReference type="Rhea" id="RHEA-COMP:9679"/>
        <dbReference type="ChEBI" id="CHEBI:30616"/>
        <dbReference type="ChEBI" id="CHEBI:33019"/>
        <dbReference type="ChEBI" id="CHEBI:35235"/>
        <dbReference type="ChEBI" id="CHEBI:78442"/>
        <dbReference type="ChEBI" id="CHEBI:78517"/>
        <dbReference type="ChEBI" id="CHEBI:456215"/>
        <dbReference type="EC" id="6.1.1.16"/>
    </reaction>
</comment>
<comment type="cofactor">
    <cofactor evidence="1">
        <name>Zn(2+)</name>
        <dbReference type="ChEBI" id="CHEBI:29105"/>
    </cofactor>
    <text evidence="1">Binds 1 zinc ion per subunit.</text>
</comment>
<comment type="subunit">
    <text evidence="1">Monomer.</text>
</comment>
<comment type="subcellular location">
    <subcellularLocation>
        <location evidence="1">Cytoplasm</location>
    </subcellularLocation>
</comment>
<comment type="similarity">
    <text evidence="1">Belongs to the class-I aminoacyl-tRNA synthetase family.</text>
</comment>
<name>SYC_WOLTR</name>
<sequence length="433" mass="49636">MYVCGPTVYDTAHIGNARSIVVYDVLFQLLKFCYGKATYVRNITDIDDKIINAANEKDSSIESISTYYTRAFHEDMRSINCVEPTHEPKAAENIKYIIELIEYLLQSGHAYESNKHIYFSIESYPEYGALSGKKIDELEHGSRVEVGENKKHPGDFVLWKPANDTDYKLSSYWNSPWGEGRPGWHIECSAMSYAYLGKDFDIHGGGIDLQFPHHENEIAQNKSAFAGSMFAKYWVHNGSLTVNKEKMSKSLFNIVKVRDLLDSGIKGEVIRYALFKTHYRKPLDWTESVISESQETLNKFYRLLRGIDVASIEKSDVEVSRDFIETLKNDLNIPEALAILHEMATKINKTNNENEKLKLTESFIKSARFIGLLESSYQEWFTAGISYQEIKRLIDLRKVAKQNKDYDAADKIRDQLKQMGVTISDNEDGTTTW</sequence>
<protein>
    <recommendedName>
        <fullName evidence="1">Cysteine--tRNA ligase</fullName>
        <ecNumber evidence="1">6.1.1.16</ecNumber>
    </recommendedName>
    <alternativeName>
        <fullName evidence="1">Cysteinyl-tRNA synthetase</fullName>
        <shortName evidence="1">CysRS</shortName>
    </alternativeName>
</protein>